<gene>
    <name type="primary">fadE26</name>
    <name type="ordered locus">Rv3504</name>
</gene>
<accession>I6YCA3</accession>
<evidence type="ECO:0000269" key="1">
    <source>
    </source>
</evidence>
<evidence type="ECO:0000269" key="2">
    <source>
    </source>
</evidence>
<evidence type="ECO:0000269" key="3">
    <source>
    </source>
</evidence>
<evidence type="ECO:0000303" key="4">
    <source>
    </source>
</evidence>
<evidence type="ECO:0000305" key="5"/>
<evidence type="ECO:0000305" key="6">
    <source>
    </source>
</evidence>
<evidence type="ECO:0007744" key="7">
    <source>
        <dbReference type="PDB" id="4X28"/>
    </source>
</evidence>
<evidence type="ECO:0007829" key="8">
    <source>
        <dbReference type="PDB" id="4X28"/>
    </source>
</evidence>
<sequence>MRISYTPQQEELRRELRSYFATLMTPERREALSSVQGEYGVGNVYRETIAQMGRDGWLALGWPKEYGGQGRSAMDQLIFTDEAAIAGAPVPFLTINSVAPTIMAYGTDEQKRFFLPRIAAGDLHFSIGYSEPGAGTDLANLRTTAVRDGDDYVVNGQKMWTSLIQYADYVWLAVRTNPESSGAKKHRGISVLIVPTTAEGFSWTPVHTMAGPDTSATYYSDVRVPVANRVGEENAGWKLVTNQLNHERVALVSPAPIFGCLREVREWAQNTKDAGGTRLIDSEWVQLNLARVHAKAEVLKLINWELASSQSGPKDAGPSPADASAAKVFGTELATEAYRLLMEVLGTAATLRQNSPGALLRGRVERMHRACLILTFGGGTNEVQRDIIGMVALGLPRANR</sequence>
<feature type="chain" id="PRO_0000438520" description="Acyl-CoA dehydrogenase FadE26">
    <location>
        <begin position="1"/>
        <end position="400"/>
    </location>
</feature>
<feature type="active site" description="Proton acceptor" evidence="6">
    <location>
        <position position="247"/>
    </location>
</feature>
<feature type="binding site" evidence="2 7">
    <location>
        <begin position="127"/>
        <end position="130"/>
    </location>
    <ligand>
        <name>FAD</name>
        <dbReference type="ChEBI" id="CHEBI:57692"/>
    </ligand>
</feature>
<feature type="binding site" evidence="2 7">
    <location>
        <position position="136"/>
    </location>
    <ligand>
        <name>FAD</name>
        <dbReference type="ChEBI" id="CHEBI:57692"/>
    </ligand>
</feature>
<feature type="binding site" evidence="2 7">
    <location>
        <position position="162"/>
    </location>
    <ligand>
        <name>FAD</name>
        <dbReference type="ChEBI" id="CHEBI:57692"/>
    </ligand>
</feature>
<feature type="binding site" evidence="2 7">
    <location>
        <begin position="380"/>
        <end position="382"/>
    </location>
    <ligand>
        <name>FAD</name>
        <dbReference type="ChEBI" id="CHEBI:57692"/>
    </ligand>
</feature>
<feature type="mutagenesis site" description="Loss of dehydrogenase activity." evidence="2">
    <original>E</original>
    <variation>A</variation>
    <location>
        <position position="247"/>
    </location>
</feature>
<feature type="helix" evidence="8">
    <location>
        <begin position="7"/>
        <end position="23"/>
    </location>
</feature>
<feature type="helix" evidence="8">
    <location>
        <begin position="26"/>
        <end position="32"/>
    </location>
</feature>
<feature type="helix" evidence="8">
    <location>
        <begin position="44"/>
        <end position="54"/>
    </location>
</feature>
<feature type="turn" evidence="8">
    <location>
        <begin position="58"/>
        <end position="61"/>
    </location>
</feature>
<feature type="helix" evidence="8">
    <location>
        <begin position="64"/>
        <end position="66"/>
    </location>
</feature>
<feature type="helix" evidence="8">
    <location>
        <begin position="73"/>
        <end position="86"/>
    </location>
</feature>
<feature type="helix" evidence="8">
    <location>
        <begin position="92"/>
        <end position="96"/>
    </location>
</feature>
<feature type="helix" evidence="8">
    <location>
        <begin position="98"/>
        <end position="105"/>
    </location>
</feature>
<feature type="helix" evidence="8">
    <location>
        <begin position="108"/>
        <end position="119"/>
    </location>
</feature>
<feature type="strand" evidence="8">
    <location>
        <begin position="125"/>
        <end position="128"/>
    </location>
</feature>
<feature type="strand" evidence="8">
    <location>
        <begin position="134"/>
        <end position="136"/>
    </location>
</feature>
<feature type="helix" evidence="8">
    <location>
        <begin position="138"/>
        <end position="140"/>
    </location>
</feature>
<feature type="strand" evidence="8">
    <location>
        <begin position="144"/>
        <end position="148"/>
    </location>
</feature>
<feature type="strand" evidence="8">
    <location>
        <begin position="151"/>
        <end position="159"/>
    </location>
</feature>
<feature type="helix" evidence="8">
    <location>
        <begin position="164"/>
        <end position="166"/>
    </location>
</feature>
<feature type="strand" evidence="8">
    <location>
        <begin position="168"/>
        <end position="176"/>
    </location>
</feature>
<feature type="helix" evidence="8">
    <location>
        <begin position="178"/>
        <end position="180"/>
    </location>
</feature>
<feature type="helix" evidence="8">
    <location>
        <begin position="184"/>
        <end position="186"/>
    </location>
</feature>
<feature type="strand" evidence="8">
    <location>
        <begin position="189"/>
        <end position="195"/>
    </location>
</feature>
<feature type="strand" evidence="8">
    <location>
        <begin position="201"/>
        <end position="206"/>
    </location>
</feature>
<feature type="strand" evidence="8">
    <location>
        <begin position="208"/>
        <end position="211"/>
    </location>
</feature>
<feature type="strand" evidence="8">
    <location>
        <begin position="214"/>
        <end position="225"/>
    </location>
</feature>
<feature type="helix" evidence="8">
    <location>
        <begin position="226"/>
        <end position="228"/>
    </location>
</feature>
<feature type="strand" evidence="8">
    <location>
        <begin position="229"/>
        <end position="232"/>
    </location>
</feature>
<feature type="helix" evidence="8">
    <location>
        <begin position="237"/>
        <end position="240"/>
    </location>
</feature>
<feature type="turn" evidence="8">
    <location>
        <begin position="241"/>
        <end position="244"/>
    </location>
</feature>
<feature type="helix" evidence="8">
    <location>
        <begin position="255"/>
        <end position="269"/>
    </location>
</feature>
<feature type="helix" evidence="8">
    <location>
        <begin position="279"/>
        <end position="281"/>
    </location>
</feature>
<feature type="helix" evidence="8">
    <location>
        <begin position="283"/>
        <end position="308"/>
    </location>
</feature>
<feature type="helix" evidence="8">
    <location>
        <begin position="320"/>
        <end position="345"/>
    </location>
</feature>
<feature type="helix" evidence="8">
    <location>
        <begin position="346"/>
        <end position="348"/>
    </location>
</feature>
<feature type="helix" evidence="8">
    <location>
        <begin position="360"/>
        <end position="362"/>
    </location>
</feature>
<feature type="helix" evidence="8">
    <location>
        <begin position="363"/>
        <end position="370"/>
    </location>
</feature>
<feature type="helix" evidence="8">
    <location>
        <begin position="372"/>
        <end position="376"/>
    </location>
</feature>
<feature type="strand" evidence="8">
    <location>
        <begin position="377"/>
        <end position="379"/>
    </location>
</feature>
<feature type="helix" evidence="8">
    <location>
        <begin position="381"/>
        <end position="393"/>
    </location>
</feature>
<name>CHSE4_MYCTU</name>
<keyword id="KW-0002">3D-structure</keyword>
<keyword id="KW-0153">Cholesterol metabolism</keyword>
<keyword id="KW-0274">FAD</keyword>
<keyword id="KW-0285">Flavoprotein</keyword>
<keyword id="KW-0442">Lipid degradation</keyword>
<keyword id="KW-0443">Lipid metabolism</keyword>
<keyword id="KW-0560">Oxidoreductase</keyword>
<keyword id="KW-1185">Reference proteome</keyword>
<keyword id="KW-0753">Steroid metabolism</keyword>
<keyword id="KW-1207">Sterol metabolism</keyword>
<keyword id="KW-0843">Virulence</keyword>
<protein>
    <recommendedName>
        <fullName evidence="4">Acyl-CoA dehydrogenase FadE26</fullName>
        <shortName evidence="4">ACAD</shortName>
        <ecNumber evidence="2">1.3.99.-</ecNumber>
    </recommendedName>
    <alternativeName>
        <fullName evidence="6">3-oxocholest-4-en-26-oyl-CoA dehydrogenase alpha subunit</fullName>
    </alternativeName>
</protein>
<dbReference type="EC" id="1.3.99.-" evidence="2"/>
<dbReference type="EMBL" id="AL123456">
    <property type="protein sequence ID" value="CCP46326.1"/>
    <property type="molecule type" value="Genomic_DNA"/>
</dbReference>
<dbReference type="RefSeq" id="NP_218021.1">
    <property type="nucleotide sequence ID" value="NC_000962.3"/>
</dbReference>
<dbReference type="RefSeq" id="WP_003418997.1">
    <property type="nucleotide sequence ID" value="NZ_NVQJ01000042.1"/>
</dbReference>
<dbReference type="PDB" id="4X28">
    <property type="method" value="X-ray"/>
    <property type="resolution" value="1.99 A"/>
    <property type="chains" value="A/B=1-400"/>
</dbReference>
<dbReference type="PDBsum" id="4X28"/>
<dbReference type="SMR" id="I6YCA3"/>
<dbReference type="FunCoup" id="I6YCA3">
    <property type="interactions" value="5"/>
</dbReference>
<dbReference type="STRING" id="83332.Rv3504"/>
<dbReference type="PaxDb" id="83332-Rv3504"/>
<dbReference type="DNASU" id="887722"/>
<dbReference type="GeneID" id="887722"/>
<dbReference type="KEGG" id="mtu:Rv3504"/>
<dbReference type="KEGG" id="mtv:RVBD_3504"/>
<dbReference type="PATRIC" id="fig|83332.111.peg.3902"/>
<dbReference type="TubercuList" id="Rv3504"/>
<dbReference type="eggNOG" id="COG1960">
    <property type="taxonomic scope" value="Bacteria"/>
</dbReference>
<dbReference type="HOGENOM" id="CLU_018204_9_0_11"/>
<dbReference type="InParanoid" id="I6YCA3"/>
<dbReference type="OrthoDB" id="2431337at2"/>
<dbReference type="PhylomeDB" id="I6YCA3"/>
<dbReference type="BioCyc" id="MetaCyc:G185E-7781-MONOMER"/>
<dbReference type="UniPathway" id="UPA01058"/>
<dbReference type="EvolutionaryTrace" id="I6YCA3"/>
<dbReference type="Proteomes" id="UP000001584">
    <property type="component" value="Chromosome"/>
</dbReference>
<dbReference type="GO" id="GO:0050660">
    <property type="term" value="F:flavin adenine dinucleotide binding"/>
    <property type="evidence" value="ECO:0007669"/>
    <property type="project" value="InterPro"/>
</dbReference>
<dbReference type="GO" id="GO:0016627">
    <property type="term" value="F:oxidoreductase activity, acting on the CH-CH group of donors"/>
    <property type="evidence" value="ECO:0007669"/>
    <property type="project" value="InterPro"/>
</dbReference>
<dbReference type="GO" id="GO:0006707">
    <property type="term" value="P:cholesterol catabolic process"/>
    <property type="evidence" value="ECO:0007669"/>
    <property type="project" value="UniProtKB-UniPathway"/>
</dbReference>
<dbReference type="CDD" id="cd01152">
    <property type="entry name" value="ACAD_fadE6_17_26"/>
    <property type="match status" value="1"/>
</dbReference>
<dbReference type="Gene3D" id="1.10.540.10">
    <property type="entry name" value="Acyl-CoA dehydrogenase/oxidase, N-terminal domain"/>
    <property type="match status" value="1"/>
</dbReference>
<dbReference type="Gene3D" id="2.40.110.10">
    <property type="entry name" value="Butyryl-CoA Dehydrogenase, subunit A, domain 2"/>
    <property type="match status" value="1"/>
</dbReference>
<dbReference type="Gene3D" id="1.20.140.10">
    <property type="entry name" value="Butyryl-CoA Dehydrogenase, subunit A, domain 3"/>
    <property type="match status" value="1"/>
</dbReference>
<dbReference type="InterPro" id="IPR006091">
    <property type="entry name" value="Acyl-CoA_Oxase/DH_mid-dom"/>
</dbReference>
<dbReference type="InterPro" id="IPR046373">
    <property type="entry name" value="Acyl-CoA_Oxase/DH_mid-dom_sf"/>
</dbReference>
<dbReference type="InterPro" id="IPR036250">
    <property type="entry name" value="AcylCo_DH-like_C"/>
</dbReference>
<dbReference type="InterPro" id="IPR009075">
    <property type="entry name" value="AcylCo_DH/oxidase_C"/>
</dbReference>
<dbReference type="InterPro" id="IPR013786">
    <property type="entry name" value="AcylCoA_DH/ox_N"/>
</dbReference>
<dbReference type="InterPro" id="IPR037069">
    <property type="entry name" value="AcylCoA_DH/ox_N_sf"/>
</dbReference>
<dbReference type="InterPro" id="IPR009100">
    <property type="entry name" value="AcylCoA_DH/oxidase_NM_dom_sf"/>
</dbReference>
<dbReference type="InterPro" id="IPR052161">
    <property type="entry name" value="Mycobact_Acyl-CoA_DH"/>
</dbReference>
<dbReference type="PANTHER" id="PTHR43292">
    <property type="entry name" value="ACYL-COA DEHYDROGENASE"/>
    <property type="match status" value="1"/>
</dbReference>
<dbReference type="PANTHER" id="PTHR43292:SF3">
    <property type="entry name" value="ACYL-COA DEHYDROGENASE FADE29"/>
    <property type="match status" value="1"/>
</dbReference>
<dbReference type="Pfam" id="PF00441">
    <property type="entry name" value="Acyl-CoA_dh_1"/>
    <property type="match status" value="1"/>
</dbReference>
<dbReference type="Pfam" id="PF02770">
    <property type="entry name" value="Acyl-CoA_dh_M"/>
    <property type="match status" value="1"/>
</dbReference>
<dbReference type="Pfam" id="PF02771">
    <property type="entry name" value="Acyl-CoA_dh_N"/>
    <property type="match status" value="1"/>
</dbReference>
<dbReference type="SUPFAM" id="SSF47203">
    <property type="entry name" value="Acyl-CoA dehydrogenase C-terminal domain-like"/>
    <property type="match status" value="1"/>
</dbReference>
<dbReference type="SUPFAM" id="SSF56645">
    <property type="entry name" value="Acyl-CoA dehydrogenase NM domain-like"/>
    <property type="match status" value="1"/>
</dbReference>
<proteinExistence type="evidence at protein level"/>
<organism>
    <name type="scientific">Mycobacterium tuberculosis (strain ATCC 25618 / H37Rv)</name>
    <dbReference type="NCBI Taxonomy" id="83332"/>
    <lineage>
        <taxon>Bacteria</taxon>
        <taxon>Bacillati</taxon>
        <taxon>Actinomycetota</taxon>
        <taxon>Actinomycetes</taxon>
        <taxon>Mycobacteriales</taxon>
        <taxon>Mycobacteriaceae</taxon>
        <taxon>Mycobacterium</taxon>
        <taxon>Mycobacterium tuberculosis complex</taxon>
    </lineage>
</organism>
<comment type="function">
    <text evidence="2 3">Involved in the first cycle of side chain dehydrogenation in the beta-oxidation of cholesterol catabolism (PubMed:26161441). It contributes partly to the virulence by increasing the efficiency of beta-oxidation. Catalyzes the dehydrogenation of acyl-CoA ester side chains of (25S)-3-oxo-cholest-4-en-26-oyl-CoA (3-OCS-CoA) to yield (24E)-3-oxo-cholest-4,24-dien-26-oyl-CoA (PubMed:26161441, PubMed:26348625). Also able to dehydrogenate steroyl-CoA such as 3-oxo-chol-4-en-24-oyl-CoA (3-OCO-CoA) as well as 3-oxo-4-pregnene-20-carboxyl-CoA (3-OPC-CoA) (PubMed:26161441). It dehydrogenates only (25S)-OCS-CoA diastereomer (Probable).</text>
</comment>
<comment type="catalytic activity">
    <reaction evidence="2">
        <text>(25S)-3-oxocholest-4-en-26-oyl-CoA + A = 3-oxo-cholest-4,24-dien-26-oyl-CoA + AH2</text>
        <dbReference type="Rhea" id="RHEA:46688"/>
        <dbReference type="ChEBI" id="CHEBI:13193"/>
        <dbReference type="ChEBI" id="CHEBI:17499"/>
        <dbReference type="ChEBI" id="CHEBI:83819"/>
        <dbReference type="ChEBI" id="CHEBI:86414"/>
    </reaction>
</comment>
<comment type="cofactor">
    <cofactor evidence="2">
        <name>FAD</name>
        <dbReference type="ChEBI" id="CHEBI:57692"/>
    </cofactor>
    <text evidence="2">Binds 1 FAD per heterodimer.</text>
</comment>
<comment type="activity regulation">
    <text evidence="2">Uncompetitively inhibited by high concentration of 3-OCS-CoA.</text>
</comment>
<comment type="biophysicochemical properties">
    <kinetics>
        <KM evidence="2">2.6 uM for 3-OCO-CoA (at pH 8.5 and 25 degrees Celsius)</KM>
        <KM evidence="2">3.3 uM for 3-OPC-CoA (at pH 8.5 and 25 degrees Celsius)</KM>
        <KM evidence="2">3.4 uM for 3-OCS-CoA (at pH 8.5 and 25 degrees Celsius)</KM>
        <KM evidence="2">4.1 uM for octanoyl-CoA (at pH 8.5 and 25 degrees Celsius)</KM>
        <text evidence="2">kcat is 2.7 sec(-1) for 3-OCS-CoA as substrate (at pH 8.5 and 25 degrees Celsius). kcat is 1.5 sec(-1) for 3-OPC-CoA as substrate (at pH 8.5 and 25 degrees Celsius). kcat is 0.48 sec(-1) for 3-OCO-CoA as substrate (at pH 8.5 and 25 degrees Celsius). kcat is 0.042 sec(-1) for octanoyl-CoA as substrate (at pH 8.5 and 25 degrees Celsius).</text>
    </kinetics>
</comment>
<comment type="pathway">
    <text evidence="6">Steroid metabolism; cholesterol degradation.</text>
</comment>
<comment type="subunit">
    <text evidence="2">Heterotetramer (dimer of heterodimers) composed of FadE26 and FadE27.</text>
</comment>
<comment type="induction">
    <text evidence="1">Induced by cholesterol and repressed by KstR.</text>
</comment>
<comment type="similarity">
    <text evidence="5">Belongs to the acyl-CoA dehydrogenase family.</text>
</comment>
<reference key="1">
    <citation type="journal article" date="1998" name="Nature">
        <title>Deciphering the biology of Mycobacterium tuberculosis from the complete genome sequence.</title>
        <authorList>
            <person name="Cole S.T."/>
            <person name="Brosch R."/>
            <person name="Parkhill J."/>
            <person name="Garnier T."/>
            <person name="Churcher C.M."/>
            <person name="Harris D.E."/>
            <person name="Gordon S.V."/>
            <person name="Eiglmeier K."/>
            <person name="Gas S."/>
            <person name="Barry C.E. III"/>
            <person name="Tekaia F."/>
            <person name="Badcock K."/>
            <person name="Basham D."/>
            <person name="Brown D."/>
            <person name="Chillingworth T."/>
            <person name="Connor R."/>
            <person name="Davies R.M."/>
            <person name="Devlin K."/>
            <person name="Feltwell T."/>
            <person name="Gentles S."/>
            <person name="Hamlin N."/>
            <person name="Holroyd S."/>
            <person name="Hornsby T."/>
            <person name="Jagels K."/>
            <person name="Krogh A."/>
            <person name="McLean J."/>
            <person name="Moule S."/>
            <person name="Murphy L.D."/>
            <person name="Oliver S."/>
            <person name="Osborne J."/>
            <person name="Quail M.A."/>
            <person name="Rajandream M.A."/>
            <person name="Rogers J."/>
            <person name="Rutter S."/>
            <person name="Seeger K."/>
            <person name="Skelton S."/>
            <person name="Squares S."/>
            <person name="Squares R."/>
            <person name="Sulston J.E."/>
            <person name="Taylor K."/>
            <person name="Whitehead S."/>
            <person name="Barrell B.G."/>
        </authorList>
    </citation>
    <scope>NUCLEOTIDE SEQUENCE [LARGE SCALE GENOMIC DNA]</scope>
    <source>
        <strain>ATCC 25618 / H37Rv</strain>
    </source>
</reference>
<reference key="2">
    <citation type="journal article" date="2007" name="Mol. Microbiol.">
        <title>A highly conserved transcriptional repressor controls a large regulon involved in lipid degradation in Mycobacterium smegmatis and Mycobacterium tuberculosis.</title>
        <authorList>
            <person name="Kendall S.L."/>
            <person name="Withers M."/>
            <person name="Soffair C.N."/>
            <person name="Moreland N.J."/>
            <person name="Gurcha S."/>
            <person name="Sidders B."/>
            <person name="Frita R."/>
            <person name="Ten Bokum A."/>
            <person name="Besra G.S."/>
            <person name="Lott J.S."/>
            <person name="Stoker N.G."/>
        </authorList>
    </citation>
    <scope>INDUCTION</scope>
    <source>
        <strain>ATCC 25618 / H37Rv</strain>
    </source>
</reference>
<reference key="3">
    <citation type="journal article" date="2011" name="Mol. Cell. Proteomics">
        <title>Proteogenomic analysis of Mycobacterium tuberculosis by high resolution mass spectrometry.</title>
        <authorList>
            <person name="Kelkar D.S."/>
            <person name="Kumar D."/>
            <person name="Kumar P."/>
            <person name="Balakrishnan L."/>
            <person name="Muthusamy B."/>
            <person name="Yadav A.K."/>
            <person name="Shrivastava P."/>
            <person name="Marimuthu A."/>
            <person name="Anand S."/>
            <person name="Sundaram H."/>
            <person name="Kingsbury R."/>
            <person name="Harsha H.C."/>
            <person name="Nair B."/>
            <person name="Prasad T.S."/>
            <person name="Chauhan D.S."/>
            <person name="Katoch K."/>
            <person name="Katoch V.M."/>
            <person name="Kumar P."/>
            <person name="Chaerkady R."/>
            <person name="Ramachandran S."/>
            <person name="Dash D."/>
            <person name="Pandey A."/>
        </authorList>
    </citation>
    <scope>IDENTIFICATION BY MASS SPECTROMETRY [LARGE SCALE ANALYSIS]</scope>
    <source>
        <strain>ATCC 25618 / H37Rv</strain>
    </source>
</reference>
<reference key="4">
    <citation type="journal article" date="2015" name="Biochemistry">
        <title>Alpha-methyl acyl CoA racemase provides Mycobacterium tuberculosis catabolic access to cholesterol esters.</title>
        <authorList>
            <person name="Lu R."/>
            <person name="Schmitz W."/>
            <person name="Sampson N.S."/>
        </authorList>
    </citation>
    <scope>FUNCTION</scope>
    <scope>SUBSTRATE SPECIFICITY</scope>
</reference>
<reference key="5">
    <citation type="journal article" date="2015" name="ACS Infect. Dis.">
        <title>Unraveling cholesterol catabolism in Mycobacterium tuberculosis: ChsE4-ChsE5 alpha2beta2 acyl-CoA dehydrogenase initiates beta-oxidation of 3-oxo-cholest-4-en-26-oyl CoA.</title>
        <authorList>
            <person name="Yang M."/>
            <person name="Lu R."/>
            <person name="Guja K.E."/>
            <person name="Wipperman M.F."/>
            <person name="St Clair J.R."/>
            <person name="Bonds A.C."/>
            <person name="Garcia-Diaz M."/>
            <person name="Sampson N.S."/>
        </authorList>
    </citation>
    <scope>X-RAY CRYSTALLOGRAPHY (1.99 ANGSTROMS) IN COMPLEX WITH FAD</scope>
    <scope>FUNCTION</scope>
    <scope>CATALYTIC ACTIVITY</scope>
    <scope>BIOPHYSICOCHEMICAL PROPERTIES</scope>
    <scope>COFACTOR</scope>
    <scope>ACTIVITY REGULATION</scope>
    <scope>ACTIVE SITE</scope>
    <scope>MUTAGENESIS OF GLU-247</scope>
    <scope>PATHWAY</scope>
    <scope>SUBSTRATE SPECIFICITY</scope>
    <scope>SUBUNIT</scope>
</reference>